<feature type="chain" id="PRO_1000135909" description="2,3-bisphosphoglycerate-independent phosphoglycerate mutase">
    <location>
        <begin position="1"/>
        <end position="525"/>
    </location>
</feature>
<feature type="active site" description="Phosphoserine intermediate" evidence="1">
    <location>
        <position position="65"/>
    </location>
</feature>
<feature type="binding site" evidence="1">
    <location>
        <position position="15"/>
    </location>
    <ligand>
        <name>Mn(2+)</name>
        <dbReference type="ChEBI" id="CHEBI:29035"/>
        <label>2</label>
    </ligand>
</feature>
<feature type="binding site" evidence="1">
    <location>
        <position position="65"/>
    </location>
    <ligand>
        <name>Mn(2+)</name>
        <dbReference type="ChEBI" id="CHEBI:29035"/>
        <label>2</label>
    </ligand>
</feature>
<feature type="binding site" evidence="1">
    <location>
        <position position="126"/>
    </location>
    <ligand>
        <name>substrate</name>
    </ligand>
</feature>
<feature type="binding site" evidence="1">
    <location>
        <begin position="156"/>
        <end position="157"/>
    </location>
    <ligand>
        <name>substrate</name>
    </ligand>
</feature>
<feature type="binding site" evidence="1">
    <location>
        <position position="188"/>
    </location>
    <ligand>
        <name>substrate</name>
    </ligand>
</feature>
<feature type="binding site" evidence="1">
    <location>
        <position position="194"/>
    </location>
    <ligand>
        <name>substrate</name>
    </ligand>
</feature>
<feature type="binding site" evidence="1">
    <location>
        <begin position="258"/>
        <end position="261"/>
    </location>
    <ligand>
        <name>substrate</name>
    </ligand>
</feature>
<feature type="binding site" evidence="1">
    <location>
        <position position="331"/>
    </location>
    <ligand>
        <name>substrate</name>
    </ligand>
</feature>
<feature type="binding site" evidence="1">
    <location>
        <position position="398"/>
    </location>
    <ligand>
        <name>Mn(2+)</name>
        <dbReference type="ChEBI" id="CHEBI:29035"/>
        <label>1</label>
    </ligand>
</feature>
<feature type="binding site" evidence="1">
    <location>
        <position position="402"/>
    </location>
    <ligand>
        <name>Mn(2+)</name>
        <dbReference type="ChEBI" id="CHEBI:29035"/>
        <label>1</label>
    </ligand>
</feature>
<feature type="binding site" evidence="1">
    <location>
        <position position="439"/>
    </location>
    <ligand>
        <name>Mn(2+)</name>
        <dbReference type="ChEBI" id="CHEBI:29035"/>
        <label>2</label>
    </ligand>
</feature>
<feature type="binding site" evidence="1">
    <location>
        <position position="440"/>
    </location>
    <ligand>
        <name>Mn(2+)</name>
        <dbReference type="ChEBI" id="CHEBI:29035"/>
        <label>2</label>
    </ligand>
</feature>
<feature type="binding site" evidence="1">
    <location>
        <position position="457"/>
    </location>
    <ligand>
        <name>Mn(2+)</name>
        <dbReference type="ChEBI" id="CHEBI:29035"/>
        <label>1</label>
    </ligand>
</feature>
<proteinExistence type="inferred from homology"/>
<evidence type="ECO:0000255" key="1">
    <source>
        <dbReference type="HAMAP-Rule" id="MF_01038"/>
    </source>
</evidence>
<dbReference type="EC" id="5.4.2.12" evidence="1"/>
<dbReference type="EMBL" id="CP000951">
    <property type="protein sequence ID" value="ACB00213.1"/>
    <property type="molecule type" value="Genomic_DNA"/>
</dbReference>
<dbReference type="RefSeq" id="WP_012307831.1">
    <property type="nucleotide sequence ID" value="NZ_JAHHPU010000006.1"/>
</dbReference>
<dbReference type="SMR" id="B1XJ47"/>
<dbReference type="STRING" id="32049.SYNPCC7002_A2233"/>
<dbReference type="KEGG" id="syp:SYNPCC7002_A2233"/>
<dbReference type="eggNOG" id="COG0696">
    <property type="taxonomic scope" value="Bacteria"/>
</dbReference>
<dbReference type="HOGENOM" id="CLU_026099_2_0_3"/>
<dbReference type="UniPathway" id="UPA00109">
    <property type="reaction ID" value="UER00186"/>
</dbReference>
<dbReference type="Proteomes" id="UP000001688">
    <property type="component" value="Chromosome"/>
</dbReference>
<dbReference type="GO" id="GO:0005829">
    <property type="term" value="C:cytosol"/>
    <property type="evidence" value="ECO:0007669"/>
    <property type="project" value="TreeGrafter"/>
</dbReference>
<dbReference type="GO" id="GO:0030145">
    <property type="term" value="F:manganese ion binding"/>
    <property type="evidence" value="ECO:0007669"/>
    <property type="project" value="UniProtKB-UniRule"/>
</dbReference>
<dbReference type="GO" id="GO:0004619">
    <property type="term" value="F:phosphoglycerate mutase activity"/>
    <property type="evidence" value="ECO:0007669"/>
    <property type="project" value="UniProtKB-EC"/>
</dbReference>
<dbReference type="GO" id="GO:0006007">
    <property type="term" value="P:glucose catabolic process"/>
    <property type="evidence" value="ECO:0007669"/>
    <property type="project" value="InterPro"/>
</dbReference>
<dbReference type="GO" id="GO:0006096">
    <property type="term" value="P:glycolytic process"/>
    <property type="evidence" value="ECO:0007669"/>
    <property type="project" value="UniProtKB-UniRule"/>
</dbReference>
<dbReference type="CDD" id="cd16010">
    <property type="entry name" value="iPGM"/>
    <property type="match status" value="1"/>
</dbReference>
<dbReference type="FunFam" id="3.40.1450.10:FF:000002">
    <property type="entry name" value="2,3-bisphosphoglycerate-independent phosphoglycerate mutase"/>
    <property type="match status" value="1"/>
</dbReference>
<dbReference type="Gene3D" id="3.40.720.10">
    <property type="entry name" value="Alkaline Phosphatase, subunit A"/>
    <property type="match status" value="1"/>
</dbReference>
<dbReference type="Gene3D" id="3.40.1450.10">
    <property type="entry name" value="BPG-independent phosphoglycerate mutase, domain B"/>
    <property type="match status" value="1"/>
</dbReference>
<dbReference type="HAMAP" id="MF_01038">
    <property type="entry name" value="GpmI"/>
    <property type="match status" value="1"/>
</dbReference>
<dbReference type="InterPro" id="IPR017850">
    <property type="entry name" value="Alkaline_phosphatase_core_sf"/>
</dbReference>
<dbReference type="InterPro" id="IPR011258">
    <property type="entry name" value="BPG-indep_PGM_N"/>
</dbReference>
<dbReference type="InterPro" id="IPR006124">
    <property type="entry name" value="Metalloenzyme"/>
</dbReference>
<dbReference type="InterPro" id="IPR036646">
    <property type="entry name" value="PGAM_B_sf"/>
</dbReference>
<dbReference type="InterPro" id="IPR005995">
    <property type="entry name" value="Pgm_bpd_ind"/>
</dbReference>
<dbReference type="NCBIfam" id="TIGR01307">
    <property type="entry name" value="pgm_bpd_ind"/>
    <property type="match status" value="1"/>
</dbReference>
<dbReference type="PANTHER" id="PTHR31637">
    <property type="entry name" value="2,3-BISPHOSPHOGLYCERATE-INDEPENDENT PHOSPHOGLYCERATE MUTASE"/>
    <property type="match status" value="1"/>
</dbReference>
<dbReference type="PANTHER" id="PTHR31637:SF0">
    <property type="entry name" value="2,3-BISPHOSPHOGLYCERATE-INDEPENDENT PHOSPHOGLYCERATE MUTASE"/>
    <property type="match status" value="1"/>
</dbReference>
<dbReference type="Pfam" id="PF06415">
    <property type="entry name" value="iPGM_N"/>
    <property type="match status" value="1"/>
</dbReference>
<dbReference type="Pfam" id="PF01676">
    <property type="entry name" value="Metalloenzyme"/>
    <property type="match status" value="1"/>
</dbReference>
<dbReference type="PIRSF" id="PIRSF001492">
    <property type="entry name" value="IPGAM"/>
    <property type="match status" value="1"/>
</dbReference>
<dbReference type="SUPFAM" id="SSF64158">
    <property type="entry name" value="2,3-Bisphosphoglycerate-independent phosphoglycerate mutase, substrate-binding domain"/>
    <property type="match status" value="1"/>
</dbReference>
<dbReference type="SUPFAM" id="SSF53649">
    <property type="entry name" value="Alkaline phosphatase-like"/>
    <property type="match status" value="1"/>
</dbReference>
<comment type="function">
    <text evidence="1">Catalyzes the interconversion of 2-phosphoglycerate and 3-phosphoglycerate.</text>
</comment>
<comment type="catalytic activity">
    <reaction evidence="1">
        <text>(2R)-2-phosphoglycerate = (2R)-3-phosphoglycerate</text>
        <dbReference type="Rhea" id="RHEA:15901"/>
        <dbReference type="ChEBI" id="CHEBI:58272"/>
        <dbReference type="ChEBI" id="CHEBI:58289"/>
        <dbReference type="EC" id="5.4.2.12"/>
    </reaction>
</comment>
<comment type="cofactor">
    <cofactor evidence="1">
        <name>Mn(2+)</name>
        <dbReference type="ChEBI" id="CHEBI:29035"/>
    </cofactor>
    <text evidence="1">Binds 2 manganese ions per subunit.</text>
</comment>
<comment type="pathway">
    <text evidence="1">Carbohydrate degradation; glycolysis; pyruvate from D-glyceraldehyde 3-phosphate: step 3/5.</text>
</comment>
<comment type="subunit">
    <text evidence="1">Monomer.</text>
</comment>
<comment type="similarity">
    <text evidence="1">Belongs to the BPG-independent phosphoglycerate mutase family.</text>
</comment>
<sequence>MANAPVSPVVLVILDGWGYRQEANANAIAAANTPNVDAFFATYPSTLIHTSGKRVGLPDGQMGNSEVGHLNLGAGRVVPQELVRISDAIEDGSFLRNDVLVKVCRETRQAGKKLHLIGLCSDGGVHSHLNHLLGLLDLAKVNGIADVHIHAITDGRDTNTTEGINYLQQIQAHIDKFGVGSISTISGRYFAMDRDRRWDRVKQAYDVMTQNGNLDQRSFAEILQSHYDNGVTDEFIPPVRLKEGAIEPGDGVIFYNFRPDRARQLSYALVDKNFQGFERELIPDLNFVTFTQYDANLPVQVAFAPQNLTKILGEVIADNGLKQFRTAETEKYPHVTYFFNGGLEVAFEGEDRELISSPQVATYDQKPEMSAKAVTDAACQAIEKGIYSLVVINYANPDMVGHTGKLEAAVQAIETVDHCLGRLVATIGKMGGTTLITADHGNAEYMADQNGKSWTAHTTNPVPFILIEGERRKVVGHGADVVLRENGCLADVAPTILDILGIDKPQEMTGQSLIAPAPYAVTRRR</sequence>
<accession>B1XJ47</accession>
<keyword id="KW-0324">Glycolysis</keyword>
<keyword id="KW-0413">Isomerase</keyword>
<keyword id="KW-0464">Manganese</keyword>
<keyword id="KW-0479">Metal-binding</keyword>
<keyword id="KW-1185">Reference proteome</keyword>
<protein>
    <recommendedName>
        <fullName evidence="1">2,3-bisphosphoglycerate-independent phosphoglycerate mutase</fullName>
        <shortName evidence="1">BPG-independent PGAM</shortName>
        <shortName evidence="1">Phosphoglyceromutase</shortName>
        <shortName evidence="1">iPGM</shortName>
        <ecNumber evidence="1">5.4.2.12</ecNumber>
    </recommendedName>
</protein>
<organism>
    <name type="scientific">Picosynechococcus sp. (strain ATCC 27264 / PCC 7002 / PR-6)</name>
    <name type="common">Agmenellum quadruplicatum</name>
    <dbReference type="NCBI Taxonomy" id="32049"/>
    <lineage>
        <taxon>Bacteria</taxon>
        <taxon>Bacillati</taxon>
        <taxon>Cyanobacteriota</taxon>
        <taxon>Cyanophyceae</taxon>
        <taxon>Oscillatoriophycideae</taxon>
        <taxon>Chroococcales</taxon>
        <taxon>Geminocystaceae</taxon>
        <taxon>Picosynechococcus</taxon>
    </lineage>
</organism>
<name>GPMI_PICP2</name>
<gene>
    <name evidence="1" type="primary">gpmI</name>
    <name type="ordered locus">SYNPCC7002_A2233</name>
</gene>
<reference key="1">
    <citation type="submission" date="2008-02" db="EMBL/GenBank/DDBJ databases">
        <title>Complete sequence of Synechococcus sp. PCC 7002.</title>
        <authorList>
            <person name="Li T."/>
            <person name="Zhao J."/>
            <person name="Zhao C."/>
            <person name="Liu Z."/>
            <person name="Zhao F."/>
            <person name="Marquardt J."/>
            <person name="Nomura C.T."/>
            <person name="Persson S."/>
            <person name="Detter J.C."/>
            <person name="Richardson P.M."/>
            <person name="Lanz C."/>
            <person name="Schuster S.C."/>
            <person name="Wang J."/>
            <person name="Li S."/>
            <person name="Huang X."/>
            <person name="Cai T."/>
            <person name="Yu Z."/>
            <person name="Luo J."/>
            <person name="Zhao J."/>
            <person name="Bryant D.A."/>
        </authorList>
    </citation>
    <scope>NUCLEOTIDE SEQUENCE [LARGE SCALE GENOMIC DNA]</scope>
    <source>
        <strain>ATCC 27264 / PCC 7002 / PR-6</strain>
    </source>
</reference>